<reference key="1">
    <citation type="journal article" date="2015" name="Proc. Natl. Acad. Sci. U.S.A.">
        <title>Trichodesmium genome maintains abundant, widespread noncoding DNA in situ, despite oligotrophic lifestyle.</title>
        <authorList>
            <person name="Walworth N."/>
            <person name="Pfreundt U."/>
            <person name="Nelson W.C."/>
            <person name="Mincer T."/>
            <person name="Heidelberg J.F."/>
            <person name="Fu F."/>
            <person name="Waterbury J.B."/>
            <person name="Glavina del Rio T."/>
            <person name="Goodwin L."/>
            <person name="Kyrpides N.C."/>
            <person name="Land M.L."/>
            <person name="Woyke T."/>
            <person name="Hutchins D.A."/>
            <person name="Hess W.R."/>
            <person name="Webb E.A."/>
        </authorList>
    </citation>
    <scope>NUCLEOTIDE SEQUENCE [LARGE SCALE GENOMIC DNA]</scope>
    <source>
        <strain>IMS101</strain>
    </source>
</reference>
<evidence type="ECO:0000255" key="1">
    <source>
        <dbReference type="HAMAP-Rule" id="MF_00377"/>
    </source>
</evidence>
<sequence length="456" mass="51887">MEIYLDNLWDQVLERLQLQLSKPTFETWIKTATAEQLENNCLVIRAPNPFARNWLQKYYIKTIADVVHDILGYPVEIYLTTFLVEDSRKNDSGLIWSEHKSVNILGENLSIPKPLPANLNAKYMFSRFVVGPNNRMAHAASLAVAESPGQEFNPLFLCGGVGLGKTHLMQAIGHYRLDIFPHSQIFYVSTEKFTNDLIAAIRKDSLQGFREHYRAADVLLVDDIQFIEGKEYTQEEFFHTFNTLHEAGKQVVLASDRPPNQIPSLQERLCSRFSMGLIADIQAPDLETRMAILLKKSEYENMVLPRDVIEYIATRYPSNIRELEGALTRVVTYISISGLPMTVENIAPILNPKTEKLEASPEAVIKVVSENFNLSIEDLKGSSRKREITLARQVGMYLMRQHTDLSLPKIGEVFGGKDHTTVLYSCDKISQLQNSDLNLVQTIRQLSDRINFSSRH</sequence>
<name>DNAA_TRIEI</name>
<protein>
    <recommendedName>
        <fullName evidence="1">Chromosomal replication initiator protein DnaA</fullName>
    </recommendedName>
</protein>
<keyword id="KW-0067">ATP-binding</keyword>
<keyword id="KW-0963">Cytoplasm</keyword>
<keyword id="KW-0235">DNA replication</keyword>
<keyword id="KW-0238">DNA-binding</keyword>
<keyword id="KW-0446">Lipid-binding</keyword>
<keyword id="KW-0547">Nucleotide-binding</keyword>
<comment type="function">
    <text evidence="1">Plays an essential role in the initiation and regulation of chromosomal replication. ATP-DnaA binds to the origin of replication (oriC) to initiate formation of the DNA replication initiation complex once per cell cycle. Binds the DnaA box (a 9 base pair repeat at the origin) and separates the double-stranded (ds)DNA. Forms a right-handed helical filament on oriC DNA; dsDNA binds to the exterior of the filament while single-stranded (ss)DNA is stabiized in the filament's interior. The ATP-DnaA-oriC complex binds and stabilizes one strand of the AT-rich DNA unwinding element (DUE), permitting loading of DNA polymerase. After initiation quickly degrades to an ADP-DnaA complex that is not apt for DNA replication. Binds acidic phospholipids.</text>
</comment>
<comment type="subunit">
    <text evidence="1">Oligomerizes as a right-handed, spiral filament on DNA at oriC.</text>
</comment>
<comment type="subcellular location">
    <subcellularLocation>
        <location evidence="1">Cytoplasm</location>
    </subcellularLocation>
</comment>
<comment type="domain">
    <text evidence="1">Domain I is involved in oligomerization and binding regulators, domain II is flexibile and of varying length in different bacteria, domain III forms the AAA+ region, while domain IV binds dsDNA.</text>
</comment>
<comment type="similarity">
    <text evidence="1">Belongs to the DnaA family.</text>
</comment>
<feature type="chain" id="PRO_1000048755" description="Chromosomal replication initiator protein DnaA">
    <location>
        <begin position="1"/>
        <end position="456"/>
    </location>
</feature>
<feature type="region of interest" description="Domain I, interacts with DnaA modulators" evidence="1">
    <location>
        <begin position="1"/>
        <end position="73"/>
    </location>
</feature>
<feature type="region of interest" description="Domain II" evidence="1">
    <location>
        <begin position="73"/>
        <end position="117"/>
    </location>
</feature>
<feature type="region of interest" description="Domain III, AAA+ region" evidence="1">
    <location>
        <begin position="118"/>
        <end position="334"/>
    </location>
</feature>
<feature type="region of interest" description="Domain IV, binds dsDNA" evidence="1">
    <location>
        <begin position="335"/>
        <end position="456"/>
    </location>
</feature>
<feature type="binding site" evidence="1">
    <location>
        <position position="162"/>
    </location>
    <ligand>
        <name>ATP</name>
        <dbReference type="ChEBI" id="CHEBI:30616"/>
    </ligand>
</feature>
<feature type="binding site" evidence="1">
    <location>
        <position position="164"/>
    </location>
    <ligand>
        <name>ATP</name>
        <dbReference type="ChEBI" id="CHEBI:30616"/>
    </ligand>
</feature>
<feature type="binding site" evidence="1">
    <location>
        <position position="165"/>
    </location>
    <ligand>
        <name>ATP</name>
        <dbReference type="ChEBI" id="CHEBI:30616"/>
    </ligand>
</feature>
<feature type="binding site" evidence="1">
    <location>
        <position position="166"/>
    </location>
    <ligand>
        <name>ATP</name>
        <dbReference type="ChEBI" id="CHEBI:30616"/>
    </ligand>
</feature>
<accession>Q11AE3</accession>
<dbReference type="EMBL" id="CP000393">
    <property type="protein sequence ID" value="ABG49531.1"/>
    <property type="molecule type" value="Genomic_DNA"/>
</dbReference>
<dbReference type="RefSeq" id="WP_011609935.1">
    <property type="nucleotide sequence ID" value="NC_008312.1"/>
</dbReference>
<dbReference type="SMR" id="Q11AE3"/>
<dbReference type="STRING" id="203124.Tery_0001"/>
<dbReference type="KEGG" id="ter:Tery_0001"/>
<dbReference type="eggNOG" id="COG0593">
    <property type="taxonomic scope" value="Bacteria"/>
</dbReference>
<dbReference type="HOGENOM" id="CLU_026910_3_1_3"/>
<dbReference type="OrthoDB" id="9807019at2"/>
<dbReference type="GO" id="GO:0005737">
    <property type="term" value="C:cytoplasm"/>
    <property type="evidence" value="ECO:0007669"/>
    <property type="project" value="UniProtKB-SubCell"/>
</dbReference>
<dbReference type="GO" id="GO:0005886">
    <property type="term" value="C:plasma membrane"/>
    <property type="evidence" value="ECO:0007669"/>
    <property type="project" value="TreeGrafter"/>
</dbReference>
<dbReference type="GO" id="GO:0005524">
    <property type="term" value="F:ATP binding"/>
    <property type="evidence" value="ECO:0007669"/>
    <property type="project" value="UniProtKB-UniRule"/>
</dbReference>
<dbReference type="GO" id="GO:0016887">
    <property type="term" value="F:ATP hydrolysis activity"/>
    <property type="evidence" value="ECO:0007669"/>
    <property type="project" value="InterPro"/>
</dbReference>
<dbReference type="GO" id="GO:0003688">
    <property type="term" value="F:DNA replication origin binding"/>
    <property type="evidence" value="ECO:0007669"/>
    <property type="project" value="UniProtKB-UniRule"/>
</dbReference>
<dbReference type="GO" id="GO:0008289">
    <property type="term" value="F:lipid binding"/>
    <property type="evidence" value="ECO:0007669"/>
    <property type="project" value="UniProtKB-KW"/>
</dbReference>
<dbReference type="GO" id="GO:0006270">
    <property type="term" value="P:DNA replication initiation"/>
    <property type="evidence" value="ECO:0007669"/>
    <property type="project" value="UniProtKB-UniRule"/>
</dbReference>
<dbReference type="GO" id="GO:0006275">
    <property type="term" value="P:regulation of DNA replication"/>
    <property type="evidence" value="ECO:0007669"/>
    <property type="project" value="UniProtKB-UniRule"/>
</dbReference>
<dbReference type="CDD" id="cd00009">
    <property type="entry name" value="AAA"/>
    <property type="match status" value="1"/>
</dbReference>
<dbReference type="CDD" id="cd06571">
    <property type="entry name" value="Bac_DnaA_C"/>
    <property type="match status" value="1"/>
</dbReference>
<dbReference type="FunFam" id="3.40.50.300:FF:000668">
    <property type="entry name" value="Chromosomal replication initiator protein DnaA"/>
    <property type="match status" value="1"/>
</dbReference>
<dbReference type="Gene3D" id="1.10.1750.10">
    <property type="match status" value="1"/>
</dbReference>
<dbReference type="Gene3D" id="1.10.8.60">
    <property type="match status" value="1"/>
</dbReference>
<dbReference type="Gene3D" id="3.30.300.180">
    <property type="match status" value="1"/>
</dbReference>
<dbReference type="Gene3D" id="3.40.50.300">
    <property type="entry name" value="P-loop containing nucleotide triphosphate hydrolases"/>
    <property type="match status" value="1"/>
</dbReference>
<dbReference type="HAMAP" id="MF_00377">
    <property type="entry name" value="DnaA_bact"/>
    <property type="match status" value="1"/>
</dbReference>
<dbReference type="InterPro" id="IPR003593">
    <property type="entry name" value="AAA+_ATPase"/>
</dbReference>
<dbReference type="InterPro" id="IPR001957">
    <property type="entry name" value="Chromosome_initiator_DnaA"/>
</dbReference>
<dbReference type="InterPro" id="IPR020591">
    <property type="entry name" value="Chromosome_initiator_DnaA-like"/>
</dbReference>
<dbReference type="InterPro" id="IPR018312">
    <property type="entry name" value="Chromosome_initiator_DnaA_CS"/>
</dbReference>
<dbReference type="InterPro" id="IPR013159">
    <property type="entry name" value="DnaA_C"/>
</dbReference>
<dbReference type="InterPro" id="IPR013317">
    <property type="entry name" value="DnaA_dom"/>
</dbReference>
<dbReference type="InterPro" id="IPR024633">
    <property type="entry name" value="DnaA_N_dom"/>
</dbReference>
<dbReference type="InterPro" id="IPR038454">
    <property type="entry name" value="DnaA_N_sf"/>
</dbReference>
<dbReference type="InterPro" id="IPR027417">
    <property type="entry name" value="P-loop_NTPase"/>
</dbReference>
<dbReference type="InterPro" id="IPR010921">
    <property type="entry name" value="Trp_repressor/repl_initiator"/>
</dbReference>
<dbReference type="NCBIfam" id="TIGR00362">
    <property type="entry name" value="DnaA"/>
    <property type="match status" value="1"/>
</dbReference>
<dbReference type="PANTHER" id="PTHR30050">
    <property type="entry name" value="CHROMOSOMAL REPLICATION INITIATOR PROTEIN DNAA"/>
    <property type="match status" value="1"/>
</dbReference>
<dbReference type="PANTHER" id="PTHR30050:SF2">
    <property type="entry name" value="CHROMOSOMAL REPLICATION INITIATOR PROTEIN DNAA"/>
    <property type="match status" value="1"/>
</dbReference>
<dbReference type="Pfam" id="PF00308">
    <property type="entry name" value="Bac_DnaA"/>
    <property type="match status" value="1"/>
</dbReference>
<dbReference type="Pfam" id="PF08299">
    <property type="entry name" value="Bac_DnaA_C"/>
    <property type="match status" value="1"/>
</dbReference>
<dbReference type="Pfam" id="PF11638">
    <property type="entry name" value="DnaA_N"/>
    <property type="match status" value="1"/>
</dbReference>
<dbReference type="PRINTS" id="PR00051">
    <property type="entry name" value="DNAA"/>
</dbReference>
<dbReference type="SMART" id="SM00382">
    <property type="entry name" value="AAA"/>
    <property type="match status" value="1"/>
</dbReference>
<dbReference type="SMART" id="SM00760">
    <property type="entry name" value="Bac_DnaA_C"/>
    <property type="match status" value="1"/>
</dbReference>
<dbReference type="SUPFAM" id="SSF52540">
    <property type="entry name" value="P-loop containing nucleoside triphosphate hydrolases"/>
    <property type="match status" value="1"/>
</dbReference>
<dbReference type="SUPFAM" id="SSF48295">
    <property type="entry name" value="TrpR-like"/>
    <property type="match status" value="1"/>
</dbReference>
<dbReference type="PROSITE" id="PS01008">
    <property type="entry name" value="DNAA"/>
    <property type="match status" value="1"/>
</dbReference>
<proteinExistence type="inferred from homology"/>
<organism>
    <name type="scientific">Trichodesmium erythraeum (strain IMS101)</name>
    <dbReference type="NCBI Taxonomy" id="203124"/>
    <lineage>
        <taxon>Bacteria</taxon>
        <taxon>Bacillati</taxon>
        <taxon>Cyanobacteriota</taxon>
        <taxon>Cyanophyceae</taxon>
        <taxon>Oscillatoriophycideae</taxon>
        <taxon>Oscillatoriales</taxon>
        <taxon>Microcoleaceae</taxon>
        <taxon>Trichodesmium</taxon>
    </lineage>
</organism>
<gene>
    <name evidence="1" type="primary">dnaA</name>
    <name type="ordered locus">Tery_0001</name>
</gene>